<name>MDTH_ECOLC</name>
<organism>
    <name type="scientific">Escherichia coli (strain ATCC 8739 / DSM 1576 / NBRC 3972 / NCIMB 8545 / WDCM 00012 / Crooks)</name>
    <dbReference type="NCBI Taxonomy" id="481805"/>
    <lineage>
        <taxon>Bacteria</taxon>
        <taxon>Pseudomonadati</taxon>
        <taxon>Pseudomonadota</taxon>
        <taxon>Gammaproteobacteria</taxon>
        <taxon>Enterobacterales</taxon>
        <taxon>Enterobacteriaceae</taxon>
        <taxon>Escherichia</taxon>
    </lineage>
</organism>
<protein>
    <recommendedName>
        <fullName evidence="1">Multidrug resistance protein MdtH</fullName>
    </recommendedName>
</protein>
<sequence>MSRVSQARNLGKYFLLIDNMLVVLGFFVVFPLISIRFVDQMGWAAVMVGIALGLRQFIQQGLGIFGGAIADRFGAKPMIVTGMLMRAAGFATMGIAHEPWLLWFSCLLSGLGGTLFDPPRSALVVKLIRPQQRGRFFSLLMMQDSAGAVIGALLGSWLLQYDFRLVCATGAVLFVLCAAFNAWLLPAWKLSTVRTPVREGMTRVMRDKRFVTYVLTLAGYYMLAVQVMLMLPIMVNDVAGAPSAVKWMYAIEACLSLTLLYPIARWSEKHFRLEHRLMAGLLIMSLSMMPVGMVSGLQQLFNLICLFYIGSIIAEPARETLSASLADARARGSYMGFSRLGLAIGGAIGYIGGGWLFDLGKSAHQPELPWMMLGIIGIFTFLALGWQFSQKRAARRLLERDA</sequence>
<reference key="1">
    <citation type="submission" date="2008-02" db="EMBL/GenBank/DDBJ databases">
        <title>Complete sequence of Escherichia coli C str. ATCC 8739.</title>
        <authorList>
            <person name="Copeland A."/>
            <person name="Lucas S."/>
            <person name="Lapidus A."/>
            <person name="Glavina del Rio T."/>
            <person name="Dalin E."/>
            <person name="Tice H."/>
            <person name="Bruce D."/>
            <person name="Goodwin L."/>
            <person name="Pitluck S."/>
            <person name="Kiss H."/>
            <person name="Brettin T."/>
            <person name="Detter J.C."/>
            <person name="Han C."/>
            <person name="Kuske C.R."/>
            <person name="Schmutz J."/>
            <person name="Larimer F."/>
            <person name="Land M."/>
            <person name="Hauser L."/>
            <person name="Kyrpides N."/>
            <person name="Mikhailova N."/>
            <person name="Ingram L."/>
            <person name="Richardson P."/>
        </authorList>
    </citation>
    <scope>NUCLEOTIDE SEQUENCE [LARGE SCALE GENOMIC DNA]</scope>
    <source>
        <strain>ATCC 8739 / DSM 1576 / NBRC 3972 / NCIMB 8545 / WDCM 00012 / Crooks</strain>
    </source>
</reference>
<comment type="function">
    <text evidence="1">Confers resistance to norfloxacin and enoxacin.</text>
</comment>
<comment type="subcellular location">
    <subcellularLocation>
        <location evidence="1">Cell inner membrane</location>
        <topology evidence="1">Multi-pass membrane protein</topology>
    </subcellularLocation>
</comment>
<comment type="similarity">
    <text evidence="1">Belongs to the major facilitator superfamily. DHA1 family. MdtH (TC 2.A.1.2.21) subfamily.</text>
</comment>
<keyword id="KW-0046">Antibiotic resistance</keyword>
<keyword id="KW-0997">Cell inner membrane</keyword>
<keyword id="KW-1003">Cell membrane</keyword>
<keyword id="KW-0472">Membrane</keyword>
<keyword id="KW-0812">Transmembrane</keyword>
<keyword id="KW-1133">Transmembrane helix</keyword>
<keyword id="KW-0813">Transport</keyword>
<proteinExistence type="inferred from homology"/>
<dbReference type="EMBL" id="CP000946">
    <property type="protein sequence ID" value="ACA78166.1"/>
    <property type="molecule type" value="Genomic_DNA"/>
</dbReference>
<dbReference type="RefSeq" id="WP_000092199.1">
    <property type="nucleotide sequence ID" value="NZ_MTFT01000032.1"/>
</dbReference>
<dbReference type="SMR" id="B1IV37"/>
<dbReference type="KEGG" id="ecl:EcolC_2535"/>
<dbReference type="HOGENOM" id="CLU_001265_60_2_6"/>
<dbReference type="GO" id="GO:0005886">
    <property type="term" value="C:plasma membrane"/>
    <property type="evidence" value="ECO:0007669"/>
    <property type="project" value="UniProtKB-SubCell"/>
</dbReference>
<dbReference type="GO" id="GO:0022857">
    <property type="term" value="F:transmembrane transporter activity"/>
    <property type="evidence" value="ECO:0007669"/>
    <property type="project" value="UniProtKB-UniRule"/>
</dbReference>
<dbReference type="GO" id="GO:0046677">
    <property type="term" value="P:response to antibiotic"/>
    <property type="evidence" value="ECO:0007669"/>
    <property type="project" value="UniProtKB-KW"/>
</dbReference>
<dbReference type="CDD" id="cd17329">
    <property type="entry name" value="MFS_MdtH_MDR_like"/>
    <property type="match status" value="1"/>
</dbReference>
<dbReference type="FunFam" id="1.20.1250.20:FF:000039">
    <property type="entry name" value="Multidrug resistance protein MdtH"/>
    <property type="match status" value="1"/>
</dbReference>
<dbReference type="Gene3D" id="1.20.1250.20">
    <property type="entry name" value="MFS general substrate transporter like domains"/>
    <property type="match status" value="1"/>
</dbReference>
<dbReference type="HAMAP" id="MF_01529">
    <property type="entry name" value="MFS_MdtH"/>
    <property type="match status" value="1"/>
</dbReference>
<dbReference type="InterPro" id="IPR011701">
    <property type="entry name" value="MFS"/>
</dbReference>
<dbReference type="InterPro" id="IPR020846">
    <property type="entry name" value="MFS_dom"/>
</dbReference>
<dbReference type="InterPro" id="IPR036259">
    <property type="entry name" value="MFS_trans_sf"/>
</dbReference>
<dbReference type="InterPro" id="IPR050171">
    <property type="entry name" value="MFS_Transporters"/>
</dbReference>
<dbReference type="InterPro" id="IPR022855">
    <property type="entry name" value="Multidrug-R_MdtH"/>
</dbReference>
<dbReference type="NCBIfam" id="NF008650">
    <property type="entry name" value="PRK11646.1"/>
    <property type="match status" value="1"/>
</dbReference>
<dbReference type="PANTHER" id="PTHR23517:SF2">
    <property type="entry name" value="MULTIDRUG RESISTANCE PROTEIN MDTH"/>
    <property type="match status" value="1"/>
</dbReference>
<dbReference type="PANTHER" id="PTHR23517">
    <property type="entry name" value="RESISTANCE PROTEIN MDTM, PUTATIVE-RELATED-RELATED"/>
    <property type="match status" value="1"/>
</dbReference>
<dbReference type="Pfam" id="PF07690">
    <property type="entry name" value="MFS_1"/>
    <property type="match status" value="1"/>
</dbReference>
<dbReference type="SUPFAM" id="SSF103473">
    <property type="entry name" value="MFS general substrate transporter"/>
    <property type="match status" value="1"/>
</dbReference>
<dbReference type="PROSITE" id="PS50850">
    <property type="entry name" value="MFS"/>
    <property type="match status" value="1"/>
</dbReference>
<accession>B1IV37</accession>
<feature type="chain" id="PRO_1000087588" description="Multidrug resistance protein MdtH">
    <location>
        <begin position="1"/>
        <end position="402"/>
    </location>
</feature>
<feature type="topological domain" description="Cytoplasmic" evidence="1">
    <location>
        <begin position="1"/>
        <end position="12"/>
    </location>
</feature>
<feature type="transmembrane region" description="Helical" evidence="1">
    <location>
        <begin position="13"/>
        <end position="33"/>
    </location>
</feature>
<feature type="topological domain" description="Periplasmic" evidence="1">
    <location>
        <begin position="34"/>
        <end position="98"/>
    </location>
</feature>
<feature type="transmembrane region" description="Helical" evidence="1">
    <location>
        <begin position="99"/>
        <end position="116"/>
    </location>
</feature>
<feature type="topological domain" description="Cytoplasmic" evidence="1">
    <location>
        <begin position="117"/>
        <end position="138"/>
    </location>
</feature>
<feature type="transmembrane region" description="Helical" evidence="1">
    <location>
        <begin position="139"/>
        <end position="159"/>
    </location>
</feature>
<feature type="topological domain" description="Periplasmic" evidence="1">
    <location>
        <begin position="160"/>
        <end position="164"/>
    </location>
</feature>
<feature type="transmembrane region" description="Helical" evidence="1">
    <location>
        <begin position="165"/>
        <end position="185"/>
    </location>
</feature>
<feature type="topological domain" description="Cytoplasmic" evidence="1">
    <location>
        <begin position="186"/>
        <end position="213"/>
    </location>
</feature>
<feature type="transmembrane region" description="Helical" evidence="1">
    <location>
        <begin position="214"/>
        <end position="234"/>
    </location>
</feature>
<feature type="topological domain" description="Periplasmic" evidence="1">
    <location>
        <begin position="235"/>
        <end position="243"/>
    </location>
</feature>
<feature type="transmembrane region" description="Helical" evidence="1">
    <location>
        <begin position="244"/>
        <end position="264"/>
    </location>
</feature>
<feature type="topological domain" description="Cytoplasmic" evidence="1">
    <location>
        <begin position="265"/>
        <end position="276"/>
    </location>
</feature>
<feature type="transmembrane region" description="Helical" evidence="1">
    <location>
        <begin position="277"/>
        <end position="297"/>
    </location>
</feature>
<feature type="topological domain" description="Periplasmic" evidence="1">
    <location>
        <begin position="298"/>
        <end position="299"/>
    </location>
</feature>
<feature type="transmembrane region" description="Helical" evidence="1">
    <location>
        <begin position="300"/>
        <end position="320"/>
    </location>
</feature>
<feature type="topological domain" description="Cytoplasmic" evidence="1">
    <location>
        <begin position="321"/>
        <end position="339"/>
    </location>
</feature>
<feature type="transmembrane region" description="Helical" evidence="1">
    <location>
        <begin position="340"/>
        <end position="360"/>
    </location>
</feature>
<feature type="topological domain" description="Periplasmic" evidence="1">
    <location>
        <begin position="361"/>
        <end position="367"/>
    </location>
</feature>
<feature type="transmembrane region" description="Helical" evidence="1">
    <location>
        <begin position="368"/>
        <end position="388"/>
    </location>
</feature>
<feature type="topological domain" description="Cytoplasmic" evidence="1">
    <location>
        <begin position="389"/>
        <end position="402"/>
    </location>
</feature>
<gene>
    <name evidence="1" type="primary">mdtH</name>
    <name type="ordered locus">EcolC_2535</name>
</gene>
<evidence type="ECO:0000255" key="1">
    <source>
        <dbReference type="HAMAP-Rule" id="MF_01529"/>
    </source>
</evidence>